<proteinExistence type="evidence at transcript level"/>
<feature type="chain" id="PRO_0000317722" description="Protein shisa-like-2B">
    <location>
        <begin position="1"/>
        <end position="161"/>
    </location>
</feature>
<feature type="transmembrane region" description="Helical" evidence="1">
    <location>
        <begin position="65"/>
        <end position="85"/>
    </location>
</feature>
<feature type="region of interest" description="Disordered" evidence="2">
    <location>
        <begin position="115"/>
        <end position="134"/>
    </location>
</feature>
<accession>A6QQ93</accession>
<evidence type="ECO:0000255" key="1"/>
<evidence type="ECO:0000256" key="2">
    <source>
        <dbReference type="SAM" id="MobiDB-lite"/>
    </source>
</evidence>
<evidence type="ECO:0000305" key="3"/>
<name>SHL2B_BOVIN</name>
<reference key="1">
    <citation type="submission" date="2007-07" db="EMBL/GenBank/DDBJ databases">
        <authorList>
            <consortium name="NIH - Mammalian Gene Collection (MGC) project"/>
        </authorList>
    </citation>
    <scope>NUCLEOTIDE SEQUENCE [LARGE SCALE MRNA]</scope>
    <source>
        <strain>Hereford</strain>
        <tissue>Hypothalamus</tissue>
    </source>
</reference>
<comment type="subcellular location">
    <subcellularLocation>
        <location evidence="3">Membrane</location>
        <topology evidence="3">Single-pass membrane protein</topology>
    </subcellularLocation>
</comment>
<comment type="similarity">
    <text evidence="3">Belongs to the shisa family.</text>
</comment>
<sequence>MSEASRVCSGYYSLNHSFVEPFQCPRRGEGATLLYCCGFADLKYCCSEPGSYFPYKHSYMWSLSIGALIGLGIAALVLLAFVISVCVLCYLFLYTKPQRLDTGLKLQHLEAVSTQEGNSNRKSKAPRSNAASNSTNETFYEADDIIQEKTMDTTQINTAYC</sequence>
<protein>
    <recommendedName>
        <fullName>Protein shisa-like-2B</fullName>
    </recommendedName>
</protein>
<dbReference type="EMBL" id="BC149710">
    <property type="protein sequence ID" value="AAI49711.1"/>
    <property type="molecule type" value="mRNA"/>
</dbReference>
<dbReference type="RefSeq" id="NP_001093843.1">
    <property type="nucleotide sequence ID" value="NM_001100373.2"/>
</dbReference>
<dbReference type="SMR" id="A6QQ93"/>
<dbReference type="FunCoup" id="A6QQ93">
    <property type="interactions" value="1"/>
</dbReference>
<dbReference type="STRING" id="9913.ENSBTAP00000012465"/>
<dbReference type="PaxDb" id="9913-ENSBTAP00000012465"/>
<dbReference type="GeneID" id="515994"/>
<dbReference type="KEGG" id="bta:515994"/>
<dbReference type="CTD" id="100132916"/>
<dbReference type="VEuPathDB" id="HostDB:ENSBTAG00000009468"/>
<dbReference type="eggNOG" id="ENOG502S1JE">
    <property type="taxonomic scope" value="Eukaryota"/>
</dbReference>
<dbReference type="HOGENOM" id="CLU_140078_0_0_1"/>
<dbReference type="InParanoid" id="A6QQ93"/>
<dbReference type="OMA" id="RYCCGFA"/>
<dbReference type="OrthoDB" id="10062839at2759"/>
<dbReference type="TreeFam" id="TF335848"/>
<dbReference type="Proteomes" id="UP000009136">
    <property type="component" value="Chromosome 20"/>
</dbReference>
<dbReference type="Bgee" id="ENSBTAG00000009468">
    <property type="expression patterns" value="Expressed in laryngeal cartilage and 47 other cell types or tissues"/>
</dbReference>
<dbReference type="GO" id="GO:0016020">
    <property type="term" value="C:membrane"/>
    <property type="evidence" value="ECO:0007669"/>
    <property type="project" value="UniProtKB-SubCell"/>
</dbReference>
<dbReference type="InterPro" id="IPR026910">
    <property type="entry name" value="Shisa"/>
</dbReference>
<dbReference type="InterPro" id="IPR053891">
    <property type="entry name" value="Shisa_N"/>
</dbReference>
<dbReference type="PANTHER" id="PTHR31395:SF2">
    <property type="entry name" value="PROTEIN SHISA-LIKE-2B"/>
    <property type="match status" value="1"/>
</dbReference>
<dbReference type="PANTHER" id="PTHR31395">
    <property type="entry name" value="SHISA"/>
    <property type="match status" value="1"/>
</dbReference>
<dbReference type="Pfam" id="PF13908">
    <property type="entry name" value="Shisa_N"/>
    <property type="match status" value="1"/>
</dbReference>
<gene>
    <name type="primary">SHISAL2B</name>
    <name type="synonym">FAM159B</name>
</gene>
<organism>
    <name type="scientific">Bos taurus</name>
    <name type="common">Bovine</name>
    <dbReference type="NCBI Taxonomy" id="9913"/>
    <lineage>
        <taxon>Eukaryota</taxon>
        <taxon>Metazoa</taxon>
        <taxon>Chordata</taxon>
        <taxon>Craniata</taxon>
        <taxon>Vertebrata</taxon>
        <taxon>Euteleostomi</taxon>
        <taxon>Mammalia</taxon>
        <taxon>Eutheria</taxon>
        <taxon>Laurasiatheria</taxon>
        <taxon>Artiodactyla</taxon>
        <taxon>Ruminantia</taxon>
        <taxon>Pecora</taxon>
        <taxon>Bovidae</taxon>
        <taxon>Bovinae</taxon>
        <taxon>Bos</taxon>
    </lineage>
</organism>
<keyword id="KW-0472">Membrane</keyword>
<keyword id="KW-1185">Reference proteome</keyword>
<keyword id="KW-0812">Transmembrane</keyword>
<keyword id="KW-1133">Transmembrane helix</keyword>